<dbReference type="EMBL" id="X78304">
    <property type="protein sequence ID" value="CAA55114.1"/>
    <property type="molecule type" value="mRNA"/>
</dbReference>
<dbReference type="EMBL" id="AK011720">
    <property type="protein sequence ID" value="BAB27800.1"/>
    <property type="molecule type" value="mRNA"/>
</dbReference>
<dbReference type="EMBL" id="AK020583">
    <property type="protein sequence ID" value="BAB32138.1"/>
    <property type="molecule type" value="mRNA"/>
</dbReference>
<dbReference type="EMBL" id="AK020620">
    <property type="protein sequence ID" value="BAB32151.1"/>
    <property type="molecule type" value="mRNA"/>
</dbReference>
<dbReference type="EMBL" id="BC039648">
    <property type="protein sequence ID" value="AAH39648.1"/>
    <property type="molecule type" value="mRNA"/>
</dbReference>
<dbReference type="CCDS" id="CCDS35812.1"/>
<dbReference type="PIR" id="S57500">
    <property type="entry name" value="S57500"/>
</dbReference>
<dbReference type="RefSeq" id="NP_036188.1">
    <property type="nucleotide sequence ID" value="NM_012058.3"/>
</dbReference>
<dbReference type="PDB" id="1914">
    <property type="method" value="X-ray"/>
    <property type="resolution" value="2.53 A"/>
    <property type="chains" value="A=1-86"/>
</dbReference>
<dbReference type="PDBsum" id="1914"/>
<dbReference type="SMR" id="P49962"/>
<dbReference type="BioGRID" id="205113">
    <property type="interactions" value="10"/>
</dbReference>
<dbReference type="FunCoup" id="P49962">
    <property type="interactions" value="1720"/>
</dbReference>
<dbReference type="IntAct" id="P49962">
    <property type="interactions" value="1"/>
</dbReference>
<dbReference type="STRING" id="10090.ENSMUSP00000027792"/>
<dbReference type="iPTMnet" id="P49962"/>
<dbReference type="PhosphoSitePlus" id="P49962"/>
<dbReference type="SwissPalm" id="P49962"/>
<dbReference type="jPOST" id="P49962"/>
<dbReference type="PaxDb" id="10090-ENSMUSP00000027792"/>
<dbReference type="PeptideAtlas" id="P49962"/>
<dbReference type="ProteomicsDB" id="263344"/>
<dbReference type="Pumba" id="P49962"/>
<dbReference type="Antibodypedia" id="47125">
    <property type="antibodies" value="90 antibodies from 19 providers"/>
</dbReference>
<dbReference type="DNASU" id="27058"/>
<dbReference type="Ensembl" id="ENSMUST00000027792.6">
    <property type="protein sequence ID" value="ENSMUSP00000027792.6"/>
    <property type="gene ID" value="ENSMUSG00000026511.8"/>
</dbReference>
<dbReference type="GeneID" id="27058"/>
<dbReference type="KEGG" id="mmu:27058"/>
<dbReference type="UCSC" id="uc007dxu.2">
    <property type="organism name" value="mouse"/>
</dbReference>
<dbReference type="AGR" id="MGI:1350930"/>
<dbReference type="CTD" id="6726"/>
<dbReference type="MGI" id="MGI:1350930">
    <property type="gene designation" value="Srp9"/>
</dbReference>
<dbReference type="VEuPathDB" id="HostDB:ENSMUSG00000026511"/>
<dbReference type="eggNOG" id="KOG3465">
    <property type="taxonomic scope" value="Eukaryota"/>
</dbReference>
<dbReference type="GeneTree" id="ENSGT00390000018505"/>
<dbReference type="InParanoid" id="P49962"/>
<dbReference type="OMA" id="YYQVWEE"/>
<dbReference type="OrthoDB" id="360923at2759"/>
<dbReference type="PhylomeDB" id="P49962"/>
<dbReference type="TreeFam" id="TF106246"/>
<dbReference type="Reactome" id="R-MMU-1799339">
    <property type="pathway name" value="SRP-dependent cotranslational protein targeting to membrane"/>
</dbReference>
<dbReference type="BioGRID-ORCS" id="27058">
    <property type="hits" value="21 hits in 76 CRISPR screens"/>
</dbReference>
<dbReference type="ChiTaRS" id="Srp9">
    <property type="organism name" value="mouse"/>
</dbReference>
<dbReference type="PRO" id="PR:P49962"/>
<dbReference type="Proteomes" id="UP000000589">
    <property type="component" value="Chromosome 1"/>
</dbReference>
<dbReference type="RNAct" id="P49962">
    <property type="molecule type" value="protein"/>
</dbReference>
<dbReference type="Bgee" id="ENSMUSG00000026511">
    <property type="expression patterns" value="Expressed in supraoptic nucleus and 260 other cell types or tissues"/>
</dbReference>
<dbReference type="ExpressionAtlas" id="P49962">
    <property type="expression patterns" value="baseline and differential"/>
</dbReference>
<dbReference type="GO" id="GO:0005786">
    <property type="term" value="C:signal recognition particle, endoplasmic reticulum targeting"/>
    <property type="evidence" value="ECO:0007669"/>
    <property type="project" value="UniProtKB-KW"/>
</dbReference>
<dbReference type="GO" id="GO:0008312">
    <property type="term" value="F:7S RNA binding"/>
    <property type="evidence" value="ECO:0007669"/>
    <property type="project" value="InterPro"/>
</dbReference>
<dbReference type="GO" id="GO:0045900">
    <property type="term" value="P:negative regulation of translational elongation"/>
    <property type="evidence" value="ECO:0007669"/>
    <property type="project" value="InterPro"/>
</dbReference>
<dbReference type="GO" id="GO:0006614">
    <property type="term" value="P:SRP-dependent cotranslational protein targeting to membrane"/>
    <property type="evidence" value="ECO:0007669"/>
    <property type="project" value="InterPro"/>
</dbReference>
<dbReference type="FunFam" id="3.30.720.10:FF:000001">
    <property type="entry name" value="Signal recognition particle 9 kDa protein"/>
    <property type="match status" value="1"/>
</dbReference>
<dbReference type="Gene3D" id="3.30.720.10">
    <property type="entry name" value="Signal recognition particle alu RNA binding heterodimer, srp9/1"/>
    <property type="match status" value="1"/>
</dbReference>
<dbReference type="InterPro" id="IPR009018">
    <property type="entry name" value="Signal_recog_particle_SRP9/14"/>
</dbReference>
<dbReference type="InterPro" id="IPR008832">
    <property type="entry name" value="SRP9"/>
</dbReference>
<dbReference type="InterPro" id="IPR039914">
    <property type="entry name" value="SRP9-like"/>
</dbReference>
<dbReference type="InterPro" id="IPR039432">
    <property type="entry name" value="SRP9_dom"/>
</dbReference>
<dbReference type="PANTHER" id="PTHR12834">
    <property type="entry name" value="SIGNAL RECOGNITION PARTICLE 9 KDA PROTEIN"/>
    <property type="match status" value="1"/>
</dbReference>
<dbReference type="PANTHER" id="PTHR12834:SF12">
    <property type="entry name" value="SIGNAL RECOGNITION PARTICLE 9 KDA PROTEIN"/>
    <property type="match status" value="1"/>
</dbReference>
<dbReference type="Pfam" id="PF05486">
    <property type="entry name" value="SRP9-21"/>
    <property type="match status" value="1"/>
</dbReference>
<dbReference type="PIRSF" id="PIRSF017029">
    <property type="entry name" value="Signal_recog_particle_SRP9"/>
    <property type="match status" value="1"/>
</dbReference>
<dbReference type="SUPFAM" id="SSF54762">
    <property type="entry name" value="Signal recognition particle alu RNA binding heterodimer, SRP9/14"/>
    <property type="match status" value="1"/>
</dbReference>
<accession>P49962</accession>
<accession>Q9D085</accession>
<proteinExistence type="evidence at protein level"/>
<evidence type="ECO:0000250" key="1">
    <source>
        <dbReference type="UniProtKB" id="P21262"/>
    </source>
</evidence>
<evidence type="ECO:0000269" key="2">
    <source>
    </source>
</evidence>
<evidence type="ECO:0000305" key="3"/>
<sequence length="86" mass="10194">MPQFQTWEEFSRAAEKLYLADPMKVRVVLKYRHVDGNLCIKVTDDLVCLVYRTDQAQDVKKIEKFHSQLMRLMVAKESRNVTMETE</sequence>
<name>SRP09_MOUSE</name>
<protein>
    <recommendedName>
        <fullName>Signal recognition particle 9 kDa protein</fullName>
        <shortName>SRP9</shortName>
    </recommendedName>
</protein>
<feature type="chain" id="PRO_0000135183" description="Signal recognition particle 9 kDa protein">
    <location>
        <begin position="1"/>
        <end position="86"/>
    </location>
</feature>
<feature type="sequence conflict" description="In Ref. 2; BAB27800." evidence="3" ref="2">
    <original>P</original>
    <variation>S</variation>
    <location>
        <position position="22"/>
    </location>
</feature>
<keyword id="KW-0002">3D-structure</keyword>
<keyword id="KW-0963">Cytoplasm</keyword>
<keyword id="KW-1185">Reference proteome</keyword>
<keyword id="KW-0687">Ribonucleoprotein</keyword>
<keyword id="KW-0694">RNA-binding</keyword>
<keyword id="KW-0733">Signal recognition particle</keyword>
<gene>
    <name type="primary">Srp9</name>
</gene>
<organism>
    <name type="scientific">Mus musculus</name>
    <name type="common">Mouse</name>
    <dbReference type="NCBI Taxonomy" id="10090"/>
    <lineage>
        <taxon>Eukaryota</taxon>
        <taxon>Metazoa</taxon>
        <taxon>Chordata</taxon>
        <taxon>Craniata</taxon>
        <taxon>Vertebrata</taxon>
        <taxon>Euteleostomi</taxon>
        <taxon>Mammalia</taxon>
        <taxon>Eutheria</taxon>
        <taxon>Euarchontoglires</taxon>
        <taxon>Glires</taxon>
        <taxon>Rodentia</taxon>
        <taxon>Myomorpha</taxon>
        <taxon>Muroidea</taxon>
        <taxon>Muridae</taxon>
        <taxon>Murinae</taxon>
        <taxon>Mus</taxon>
        <taxon>Mus</taxon>
    </lineage>
</organism>
<comment type="function">
    <text evidence="1">Component of the signal recognition particle (SRP) complex, a ribonucleoprotein complex that mediates the cotranslational targeting of secretory and membrane proteins to the endoplasmic reticulum (ER) (By similarity). SRP9 together with SRP14 and the Alu portion of the SRP RNA, constitutes the elongation arrest domain of SRP (By similarity). The complex of SRP9 and SRP14 is required for SRP RNA binding (By similarity).</text>
</comment>
<comment type="subunit">
    <text evidence="1 2">Heterodimer with SRP14; binds RNA as heterodimer (By similarity). Component of a signal recognition particle complex that consists of a 7SL RNA molecule of 300 nucleotides and six protein subunits: SRP72, SRP68, SRP54, SRP19, SRP14 and SRP9 (PubMed:9233785).</text>
</comment>
<comment type="subcellular location">
    <subcellularLocation>
        <location>Cytoplasm</location>
    </subcellularLocation>
</comment>
<comment type="similarity">
    <text evidence="3">Belongs to the SRP9 family.</text>
</comment>
<reference key="1">
    <citation type="journal article" date="1994" name="Nucleic Acids Res.">
        <title>The heterodimeric subunit SRP9/14 of the signal recognition particle functions as permuted single polypeptide chain.</title>
        <authorList>
            <person name="Bovia F."/>
            <person name="Bui N."/>
            <person name="Strub K."/>
        </authorList>
    </citation>
    <scope>NUCLEOTIDE SEQUENCE [MRNA]</scope>
</reference>
<reference key="2">
    <citation type="journal article" date="2005" name="Science">
        <title>The transcriptional landscape of the mammalian genome.</title>
        <authorList>
            <person name="Carninci P."/>
            <person name="Kasukawa T."/>
            <person name="Katayama S."/>
            <person name="Gough J."/>
            <person name="Frith M.C."/>
            <person name="Maeda N."/>
            <person name="Oyama R."/>
            <person name="Ravasi T."/>
            <person name="Lenhard B."/>
            <person name="Wells C."/>
            <person name="Kodzius R."/>
            <person name="Shimokawa K."/>
            <person name="Bajic V.B."/>
            <person name="Brenner S.E."/>
            <person name="Batalov S."/>
            <person name="Forrest A.R."/>
            <person name="Zavolan M."/>
            <person name="Davis M.J."/>
            <person name="Wilming L.G."/>
            <person name="Aidinis V."/>
            <person name="Allen J.E."/>
            <person name="Ambesi-Impiombato A."/>
            <person name="Apweiler R."/>
            <person name="Aturaliya R.N."/>
            <person name="Bailey T.L."/>
            <person name="Bansal M."/>
            <person name="Baxter L."/>
            <person name="Beisel K.W."/>
            <person name="Bersano T."/>
            <person name="Bono H."/>
            <person name="Chalk A.M."/>
            <person name="Chiu K.P."/>
            <person name="Choudhary V."/>
            <person name="Christoffels A."/>
            <person name="Clutterbuck D.R."/>
            <person name="Crowe M.L."/>
            <person name="Dalla E."/>
            <person name="Dalrymple B.P."/>
            <person name="de Bono B."/>
            <person name="Della Gatta G."/>
            <person name="di Bernardo D."/>
            <person name="Down T."/>
            <person name="Engstrom P."/>
            <person name="Fagiolini M."/>
            <person name="Faulkner G."/>
            <person name="Fletcher C.F."/>
            <person name="Fukushima T."/>
            <person name="Furuno M."/>
            <person name="Futaki S."/>
            <person name="Gariboldi M."/>
            <person name="Georgii-Hemming P."/>
            <person name="Gingeras T.R."/>
            <person name="Gojobori T."/>
            <person name="Green R.E."/>
            <person name="Gustincich S."/>
            <person name="Harbers M."/>
            <person name="Hayashi Y."/>
            <person name="Hensch T.K."/>
            <person name="Hirokawa N."/>
            <person name="Hill D."/>
            <person name="Huminiecki L."/>
            <person name="Iacono M."/>
            <person name="Ikeo K."/>
            <person name="Iwama A."/>
            <person name="Ishikawa T."/>
            <person name="Jakt M."/>
            <person name="Kanapin A."/>
            <person name="Katoh M."/>
            <person name="Kawasawa Y."/>
            <person name="Kelso J."/>
            <person name="Kitamura H."/>
            <person name="Kitano H."/>
            <person name="Kollias G."/>
            <person name="Krishnan S.P."/>
            <person name="Kruger A."/>
            <person name="Kummerfeld S.K."/>
            <person name="Kurochkin I.V."/>
            <person name="Lareau L.F."/>
            <person name="Lazarevic D."/>
            <person name="Lipovich L."/>
            <person name="Liu J."/>
            <person name="Liuni S."/>
            <person name="McWilliam S."/>
            <person name="Madan Babu M."/>
            <person name="Madera M."/>
            <person name="Marchionni L."/>
            <person name="Matsuda H."/>
            <person name="Matsuzawa S."/>
            <person name="Miki H."/>
            <person name="Mignone F."/>
            <person name="Miyake S."/>
            <person name="Morris K."/>
            <person name="Mottagui-Tabar S."/>
            <person name="Mulder N."/>
            <person name="Nakano N."/>
            <person name="Nakauchi H."/>
            <person name="Ng P."/>
            <person name="Nilsson R."/>
            <person name="Nishiguchi S."/>
            <person name="Nishikawa S."/>
            <person name="Nori F."/>
            <person name="Ohara O."/>
            <person name="Okazaki Y."/>
            <person name="Orlando V."/>
            <person name="Pang K.C."/>
            <person name="Pavan W.J."/>
            <person name="Pavesi G."/>
            <person name="Pesole G."/>
            <person name="Petrovsky N."/>
            <person name="Piazza S."/>
            <person name="Reed J."/>
            <person name="Reid J.F."/>
            <person name="Ring B.Z."/>
            <person name="Ringwald M."/>
            <person name="Rost B."/>
            <person name="Ruan Y."/>
            <person name="Salzberg S.L."/>
            <person name="Sandelin A."/>
            <person name="Schneider C."/>
            <person name="Schoenbach C."/>
            <person name="Sekiguchi K."/>
            <person name="Semple C.A."/>
            <person name="Seno S."/>
            <person name="Sessa L."/>
            <person name="Sheng Y."/>
            <person name="Shibata Y."/>
            <person name="Shimada H."/>
            <person name="Shimada K."/>
            <person name="Silva D."/>
            <person name="Sinclair B."/>
            <person name="Sperling S."/>
            <person name="Stupka E."/>
            <person name="Sugiura K."/>
            <person name="Sultana R."/>
            <person name="Takenaka Y."/>
            <person name="Taki K."/>
            <person name="Tammoja K."/>
            <person name="Tan S.L."/>
            <person name="Tang S."/>
            <person name="Taylor M.S."/>
            <person name="Tegner J."/>
            <person name="Teichmann S.A."/>
            <person name="Ueda H.R."/>
            <person name="van Nimwegen E."/>
            <person name="Verardo R."/>
            <person name="Wei C.L."/>
            <person name="Yagi K."/>
            <person name="Yamanishi H."/>
            <person name="Zabarovsky E."/>
            <person name="Zhu S."/>
            <person name="Zimmer A."/>
            <person name="Hide W."/>
            <person name="Bult C."/>
            <person name="Grimmond S.M."/>
            <person name="Teasdale R.D."/>
            <person name="Liu E.T."/>
            <person name="Brusic V."/>
            <person name="Quackenbush J."/>
            <person name="Wahlestedt C."/>
            <person name="Mattick J.S."/>
            <person name="Hume D.A."/>
            <person name="Kai C."/>
            <person name="Sasaki D."/>
            <person name="Tomaru Y."/>
            <person name="Fukuda S."/>
            <person name="Kanamori-Katayama M."/>
            <person name="Suzuki M."/>
            <person name="Aoki J."/>
            <person name="Arakawa T."/>
            <person name="Iida J."/>
            <person name="Imamura K."/>
            <person name="Itoh M."/>
            <person name="Kato T."/>
            <person name="Kawaji H."/>
            <person name="Kawagashira N."/>
            <person name="Kawashima T."/>
            <person name="Kojima M."/>
            <person name="Kondo S."/>
            <person name="Konno H."/>
            <person name="Nakano K."/>
            <person name="Ninomiya N."/>
            <person name="Nishio T."/>
            <person name="Okada M."/>
            <person name="Plessy C."/>
            <person name="Shibata K."/>
            <person name="Shiraki T."/>
            <person name="Suzuki S."/>
            <person name="Tagami M."/>
            <person name="Waki K."/>
            <person name="Watahiki A."/>
            <person name="Okamura-Oho Y."/>
            <person name="Suzuki H."/>
            <person name="Kawai J."/>
            <person name="Hayashizaki Y."/>
        </authorList>
    </citation>
    <scope>NUCLEOTIDE SEQUENCE [LARGE SCALE MRNA]</scope>
    <source>
        <strain>C57BL/6J</strain>
        <tissue>Embryo</tissue>
        <tissue>Urinary bladder</tissue>
    </source>
</reference>
<reference key="3">
    <citation type="journal article" date="2004" name="Genome Res.">
        <title>The status, quality, and expansion of the NIH full-length cDNA project: the Mammalian Gene Collection (MGC).</title>
        <authorList>
            <consortium name="The MGC Project Team"/>
        </authorList>
    </citation>
    <scope>NUCLEOTIDE SEQUENCE [LARGE SCALE MRNA]</scope>
    <source>
        <strain>FVB/N</strain>
        <tissue>Mammary gland</tissue>
    </source>
</reference>
<reference key="4">
    <citation type="journal article" date="2010" name="Cell">
        <title>A tissue-specific atlas of mouse protein phosphorylation and expression.</title>
        <authorList>
            <person name="Huttlin E.L."/>
            <person name="Jedrychowski M.P."/>
            <person name="Elias J.E."/>
            <person name="Goswami T."/>
            <person name="Rad R."/>
            <person name="Beausoleil S.A."/>
            <person name="Villen J."/>
            <person name="Haas W."/>
            <person name="Sowa M.E."/>
            <person name="Gygi S.P."/>
        </authorList>
    </citation>
    <scope>IDENTIFICATION BY MASS SPECTROMETRY [LARGE SCALE ANALYSIS]</scope>
    <source>
        <tissue>Brain</tissue>
        <tissue>Heart</tissue>
        <tissue>Kidney</tissue>
        <tissue>Pancreas</tissue>
        <tissue>Spleen</tissue>
        <tissue>Testis</tissue>
    </source>
</reference>
<reference key="5">
    <citation type="journal article" date="1997" name="EMBO J.">
        <title>The crystal structure of the signal recognition particle Alu RNA binding heterodimer, SRP9/14.</title>
        <authorList>
            <person name="Birse D.E."/>
            <person name="Kapp U."/>
            <person name="Strub K."/>
            <person name="Cusack S."/>
            <person name="Aaberg A."/>
        </authorList>
    </citation>
    <scope>X-RAY CRYSTALLOGRAPHY (2.53 ANGSTROMS) IN COMPLEX WITH SRP14</scope>
</reference>